<reference key="1">
    <citation type="submission" date="2006-02" db="EMBL/GenBank/DDBJ databases">
        <authorList>
            <consortium name="NIH - Mammalian Gene Collection (MGC) project"/>
        </authorList>
    </citation>
    <scope>NUCLEOTIDE SEQUENCE [LARGE SCALE MRNA]</scope>
    <source>
        <strain>Hereford</strain>
        <tissue>Uterus</tissue>
    </source>
</reference>
<accession>Q2HJ41</accession>
<comment type="function">
    <text evidence="1">Participates in the second step of pre-mRNA splicing.</text>
</comment>
<comment type="subunit">
    <text evidence="1">Heterodimer with PPIH. Interacts with PRPF4 and with the spliceosome. Part of a complex containing U4/U6 snRNPs (By similarity).</text>
</comment>
<comment type="subcellular location">
    <subcellularLocation>
        <location evidence="1">Nucleus speckle</location>
    </subcellularLocation>
    <text evidence="1">Colocalizes with spliceosomal snRNPs.</text>
</comment>
<comment type="similarity">
    <text evidence="3">Belongs to the PRP18 family.</text>
</comment>
<feature type="chain" id="PRO_0000324099" description="Pre-mRNA-splicing factor 18">
    <location>
        <begin position="1"/>
        <end position="342"/>
    </location>
</feature>
<feature type="modified residue" description="N-acetylmethionine" evidence="2">
    <location>
        <position position="1"/>
    </location>
</feature>
<keyword id="KW-0007">Acetylation</keyword>
<keyword id="KW-0507">mRNA processing</keyword>
<keyword id="KW-0508">mRNA splicing</keyword>
<keyword id="KW-0539">Nucleus</keyword>
<keyword id="KW-1185">Reference proteome</keyword>
<keyword id="KW-0747">Spliceosome</keyword>
<sequence>MDVLKSEILRKRQLVEDRNLLVENKKYFKRSELAKKEEEAYFERCGYKIQPKDEDQKPLTSSNPVLELELAEEKLPMTLSRQEVIRRLRERGEPIRLFGETDYDAFQRLRKIEILTPEVNKGLRNDLKAALDKIDQQYLNELVGGQEPGEEDTQNDLKVHEENTTIEELEALGESLGKGDDHKDMDIITKFLKFLLGVWAKELNAREDYVKRSVQGKLNSATQKQTESYLRPLFRKLRKRNLPADIKESITDIIKFMLQREYVKANDAYLQMAIGNAPWPIGVTMVGIHARTGREKIFSKHVAHVLNDETQRKYIQGLKRLMTICQKHFPTDPSKCVEYNAL</sequence>
<organism>
    <name type="scientific">Bos taurus</name>
    <name type="common">Bovine</name>
    <dbReference type="NCBI Taxonomy" id="9913"/>
    <lineage>
        <taxon>Eukaryota</taxon>
        <taxon>Metazoa</taxon>
        <taxon>Chordata</taxon>
        <taxon>Craniata</taxon>
        <taxon>Vertebrata</taxon>
        <taxon>Euteleostomi</taxon>
        <taxon>Mammalia</taxon>
        <taxon>Eutheria</taxon>
        <taxon>Laurasiatheria</taxon>
        <taxon>Artiodactyla</taxon>
        <taxon>Ruminantia</taxon>
        <taxon>Pecora</taxon>
        <taxon>Bovidae</taxon>
        <taxon>Bovinae</taxon>
        <taxon>Bos</taxon>
    </lineage>
</organism>
<protein>
    <recommendedName>
        <fullName>Pre-mRNA-splicing factor 18</fullName>
    </recommendedName>
    <alternativeName>
        <fullName>PRP18 homolog</fullName>
    </alternativeName>
</protein>
<gene>
    <name type="primary">PRPF18</name>
</gene>
<proteinExistence type="evidence at transcript level"/>
<name>PRP18_BOVIN</name>
<dbReference type="EMBL" id="BC113323">
    <property type="protein sequence ID" value="AAI13324.1"/>
    <property type="molecule type" value="mRNA"/>
</dbReference>
<dbReference type="RefSeq" id="NP_001068791.1">
    <property type="nucleotide sequence ID" value="NM_001075323.1"/>
</dbReference>
<dbReference type="BMRB" id="Q2HJ41"/>
<dbReference type="SMR" id="Q2HJ41"/>
<dbReference type="FunCoup" id="Q2HJ41">
    <property type="interactions" value="3981"/>
</dbReference>
<dbReference type="STRING" id="9913.ENSBTAP00000061262"/>
<dbReference type="PaxDb" id="9913-ENSBTAP00000022912"/>
<dbReference type="Ensembl" id="ENSBTAT00000022912.5">
    <property type="protein sequence ID" value="ENSBTAP00000022912.3"/>
    <property type="gene ID" value="ENSBTAG00000017244.5"/>
</dbReference>
<dbReference type="GeneID" id="507639"/>
<dbReference type="KEGG" id="bta:507639"/>
<dbReference type="CTD" id="8559"/>
<dbReference type="VEuPathDB" id="HostDB:ENSBTAG00000017244"/>
<dbReference type="VGNC" id="VGNC:111262">
    <property type="gene designation" value="PRPF18"/>
</dbReference>
<dbReference type="eggNOG" id="KOG2808">
    <property type="taxonomic scope" value="Eukaryota"/>
</dbReference>
<dbReference type="GeneTree" id="ENSGT00390000015073"/>
<dbReference type="HOGENOM" id="CLU_039675_0_1_1"/>
<dbReference type="InParanoid" id="Q2HJ41"/>
<dbReference type="OMA" id="SFAQVRW"/>
<dbReference type="OrthoDB" id="10261918at2759"/>
<dbReference type="TreeFam" id="TF315049"/>
<dbReference type="Reactome" id="R-BTA-72163">
    <property type="pathway name" value="mRNA Splicing - Major Pathway"/>
</dbReference>
<dbReference type="Proteomes" id="UP000009136">
    <property type="component" value="Chromosome 13"/>
</dbReference>
<dbReference type="Bgee" id="ENSBTAG00000017244">
    <property type="expression patterns" value="Expressed in oocyte and 105 other cell types or tissues"/>
</dbReference>
<dbReference type="GO" id="GO:0016607">
    <property type="term" value="C:nuclear speck"/>
    <property type="evidence" value="ECO:0007669"/>
    <property type="project" value="UniProtKB-SubCell"/>
</dbReference>
<dbReference type="GO" id="GO:0071021">
    <property type="term" value="C:U2-type post-spliceosomal complex"/>
    <property type="evidence" value="ECO:0000318"/>
    <property type="project" value="GO_Central"/>
</dbReference>
<dbReference type="GO" id="GO:0046540">
    <property type="term" value="C:U4/U6 x U5 tri-snRNP complex"/>
    <property type="evidence" value="ECO:0000318"/>
    <property type="project" value="GO_Central"/>
</dbReference>
<dbReference type="GO" id="GO:0005682">
    <property type="term" value="C:U5 snRNP"/>
    <property type="evidence" value="ECO:0000318"/>
    <property type="project" value="GO_Central"/>
</dbReference>
<dbReference type="GO" id="GO:0000350">
    <property type="term" value="P:generation of catalytic spliceosome for second transesterification step"/>
    <property type="evidence" value="ECO:0000318"/>
    <property type="project" value="GO_Central"/>
</dbReference>
<dbReference type="FunFam" id="1.20.940.10:FF:000002">
    <property type="entry name" value="Pre-mRNA processing factor 18"/>
    <property type="match status" value="1"/>
</dbReference>
<dbReference type="FunFam" id="4.10.280.110:FF:000001">
    <property type="entry name" value="pre-mRNA-splicing factor 18 isoform X2"/>
    <property type="match status" value="1"/>
</dbReference>
<dbReference type="Gene3D" id="1.20.940.10">
    <property type="entry name" value="Functional domain of the splicing factor Prp18"/>
    <property type="match status" value="1"/>
</dbReference>
<dbReference type="Gene3D" id="4.10.280.110">
    <property type="entry name" value="Pre-mRNA processing factor 4 domain"/>
    <property type="match status" value="1"/>
</dbReference>
<dbReference type="InterPro" id="IPR004098">
    <property type="entry name" value="Prp18"/>
</dbReference>
<dbReference type="InterPro" id="IPR014906">
    <property type="entry name" value="PRP4-like"/>
</dbReference>
<dbReference type="InterPro" id="IPR036285">
    <property type="entry name" value="PRP4-like_sf"/>
</dbReference>
<dbReference type="InterPro" id="IPR039979">
    <property type="entry name" value="PRPF18"/>
</dbReference>
<dbReference type="PANTHER" id="PTHR13007">
    <property type="entry name" value="PRE-MRNA SPLICING FACTOR-RELATED"/>
    <property type="match status" value="1"/>
</dbReference>
<dbReference type="PANTHER" id="PTHR13007:SF19">
    <property type="entry name" value="PRE-MRNA-SPLICING FACTOR 18"/>
    <property type="match status" value="1"/>
</dbReference>
<dbReference type="Pfam" id="PF02840">
    <property type="entry name" value="Prp18"/>
    <property type="match status" value="1"/>
</dbReference>
<dbReference type="Pfam" id="PF08799">
    <property type="entry name" value="PRP4"/>
    <property type="match status" value="1"/>
</dbReference>
<dbReference type="SMART" id="SM00500">
    <property type="entry name" value="SFM"/>
    <property type="match status" value="1"/>
</dbReference>
<dbReference type="SUPFAM" id="SSF47938">
    <property type="entry name" value="Functional domain of the splicing factor Prp18"/>
    <property type="match status" value="1"/>
</dbReference>
<dbReference type="SUPFAM" id="SSF158230">
    <property type="entry name" value="PRP4-like"/>
    <property type="match status" value="1"/>
</dbReference>
<evidence type="ECO:0000250" key="1"/>
<evidence type="ECO:0000250" key="2">
    <source>
        <dbReference type="UniProtKB" id="Q99633"/>
    </source>
</evidence>
<evidence type="ECO:0000305" key="3"/>